<feature type="chain" id="PRO_0000386328" description="GTPase Obg">
    <location>
        <begin position="1"/>
        <end position="369"/>
    </location>
</feature>
<feature type="domain" description="Obg" evidence="2">
    <location>
        <begin position="1"/>
        <end position="158"/>
    </location>
</feature>
<feature type="domain" description="OBG-type G" evidence="1">
    <location>
        <begin position="159"/>
        <end position="362"/>
    </location>
</feature>
<feature type="region of interest" description="Disordered" evidence="3">
    <location>
        <begin position="126"/>
        <end position="146"/>
    </location>
</feature>
<feature type="compositionally biased region" description="Polar residues" evidence="3">
    <location>
        <begin position="128"/>
        <end position="138"/>
    </location>
</feature>
<feature type="binding site" evidence="1">
    <location>
        <begin position="165"/>
        <end position="172"/>
    </location>
    <ligand>
        <name>GTP</name>
        <dbReference type="ChEBI" id="CHEBI:37565"/>
    </ligand>
</feature>
<feature type="binding site" evidence="1">
    <location>
        <position position="172"/>
    </location>
    <ligand>
        <name>Mg(2+)</name>
        <dbReference type="ChEBI" id="CHEBI:18420"/>
    </ligand>
</feature>
<feature type="binding site" evidence="1">
    <location>
        <begin position="190"/>
        <end position="194"/>
    </location>
    <ligand>
        <name>GTP</name>
        <dbReference type="ChEBI" id="CHEBI:37565"/>
    </ligand>
</feature>
<feature type="binding site" evidence="1">
    <location>
        <position position="192"/>
    </location>
    <ligand>
        <name>Mg(2+)</name>
        <dbReference type="ChEBI" id="CHEBI:18420"/>
    </ligand>
</feature>
<feature type="binding site" evidence="1">
    <location>
        <begin position="212"/>
        <end position="215"/>
    </location>
    <ligand>
        <name>GTP</name>
        <dbReference type="ChEBI" id="CHEBI:37565"/>
    </ligand>
</feature>
<feature type="binding site" evidence="1">
    <location>
        <begin position="280"/>
        <end position="283"/>
    </location>
    <ligand>
        <name>GTP</name>
        <dbReference type="ChEBI" id="CHEBI:37565"/>
    </ligand>
</feature>
<feature type="binding site" evidence="1">
    <location>
        <begin position="343"/>
        <end position="345"/>
    </location>
    <ligand>
        <name>GTP</name>
        <dbReference type="ChEBI" id="CHEBI:37565"/>
    </ligand>
</feature>
<accession>Q30QP0</accession>
<dbReference type="EC" id="3.6.5.-" evidence="1"/>
<dbReference type="EMBL" id="CP000153">
    <property type="protein sequence ID" value="ABB44691.1"/>
    <property type="molecule type" value="Genomic_DNA"/>
</dbReference>
<dbReference type="RefSeq" id="WP_011373043.1">
    <property type="nucleotide sequence ID" value="NC_007575.1"/>
</dbReference>
<dbReference type="SMR" id="Q30QP0"/>
<dbReference type="STRING" id="326298.Suden_1414"/>
<dbReference type="KEGG" id="tdn:Suden_1414"/>
<dbReference type="eggNOG" id="COG0536">
    <property type="taxonomic scope" value="Bacteria"/>
</dbReference>
<dbReference type="HOGENOM" id="CLU_011747_2_0_7"/>
<dbReference type="OrthoDB" id="9807318at2"/>
<dbReference type="Proteomes" id="UP000002714">
    <property type="component" value="Chromosome"/>
</dbReference>
<dbReference type="GO" id="GO:0005737">
    <property type="term" value="C:cytoplasm"/>
    <property type="evidence" value="ECO:0007669"/>
    <property type="project" value="UniProtKB-SubCell"/>
</dbReference>
<dbReference type="GO" id="GO:0005525">
    <property type="term" value="F:GTP binding"/>
    <property type="evidence" value="ECO:0007669"/>
    <property type="project" value="UniProtKB-UniRule"/>
</dbReference>
<dbReference type="GO" id="GO:0003924">
    <property type="term" value="F:GTPase activity"/>
    <property type="evidence" value="ECO:0007669"/>
    <property type="project" value="UniProtKB-UniRule"/>
</dbReference>
<dbReference type="GO" id="GO:0000287">
    <property type="term" value="F:magnesium ion binding"/>
    <property type="evidence" value="ECO:0007669"/>
    <property type="project" value="InterPro"/>
</dbReference>
<dbReference type="GO" id="GO:0042254">
    <property type="term" value="P:ribosome biogenesis"/>
    <property type="evidence" value="ECO:0007669"/>
    <property type="project" value="UniProtKB-UniRule"/>
</dbReference>
<dbReference type="CDD" id="cd01898">
    <property type="entry name" value="Obg"/>
    <property type="match status" value="1"/>
</dbReference>
<dbReference type="FunFam" id="2.70.210.12:FF:000001">
    <property type="entry name" value="GTPase Obg"/>
    <property type="match status" value="1"/>
</dbReference>
<dbReference type="Gene3D" id="2.70.210.12">
    <property type="entry name" value="GTP1/OBG domain"/>
    <property type="match status" value="1"/>
</dbReference>
<dbReference type="Gene3D" id="3.40.50.300">
    <property type="entry name" value="P-loop containing nucleotide triphosphate hydrolases"/>
    <property type="match status" value="1"/>
</dbReference>
<dbReference type="HAMAP" id="MF_01454">
    <property type="entry name" value="GTPase_Obg"/>
    <property type="match status" value="1"/>
</dbReference>
<dbReference type="InterPro" id="IPR031167">
    <property type="entry name" value="G_OBG"/>
</dbReference>
<dbReference type="InterPro" id="IPR006073">
    <property type="entry name" value="GTP-bd"/>
</dbReference>
<dbReference type="InterPro" id="IPR014100">
    <property type="entry name" value="GTP-bd_Obg/CgtA"/>
</dbReference>
<dbReference type="InterPro" id="IPR006169">
    <property type="entry name" value="GTP1_OBG_dom"/>
</dbReference>
<dbReference type="InterPro" id="IPR036726">
    <property type="entry name" value="GTP1_OBG_dom_sf"/>
</dbReference>
<dbReference type="InterPro" id="IPR045086">
    <property type="entry name" value="OBG_GTPase"/>
</dbReference>
<dbReference type="InterPro" id="IPR027417">
    <property type="entry name" value="P-loop_NTPase"/>
</dbReference>
<dbReference type="NCBIfam" id="TIGR02729">
    <property type="entry name" value="Obg_CgtA"/>
    <property type="match status" value="1"/>
</dbReference>
<dbReference type="NCBIfam" id="NF008956">
    <property type="entry name" value="PRK12299.1"/>
    <property type="match status" value="1"/>
</dbReference>
<dbReference type="PANTHER" id="PTHR11702">
    <property type="entry name" value="DEVELOPMENTALLY REGULATED GTP-BINDING PROTEIN-RELATED"/>
    <property type="match status" value="1"/>
</dbReference>
<dbReference type="PANTHER" id="PTHR11702:SF31">
    <property type="entry name" value="MITOCHONDRIAL RIBOSOME-ASSOCIATED GTPASE 2"/>
    <property type="match status" value="1"/>
</dbReference>
<dbReference type="Pfam" id="PF01018">
    <property type="entry name" value="GTP1_OBG"/>
    <property type="match status" value="1"/>
</dbReference>
<dbReference type="Pfam" id="PF01926">
    <property type="entry name" value="MMR_HSR1"/>
    <property type="match status" value="1"/>
</dbReference>
<dbReference type="PIRSF" id="PIRSF002401">
    <property type="entry name" value="GTP_bd_Obg/CgtA"/>
    <property type="match status" value="1"/>
</dbReference>
<dbReference type="PRINTS" id="PR00326">
    <property type="entry name" value="GTP1OBG"/>
</dbReference>
<dbReference type="SUPFAM" id="SSF82051">
    <property type="entry name" value="Obg GTP-binding protein N-terminal domain"/>
    <property type="match status" value="1"/>
</dbReference>
<dbReference type="SUPFAM" id="SSF52540">
    <property type="entry name" value="P-loop containing nucleoside triphosphate hydrolases"/>
    <property type="match status" value="1"/>
</dbReference>
<dbReference type="PROSITE" id="PS51710">
    <property type="entry name" value="G_OBG"/>
    <property type="match status" value="1"/>
</dbReference>
<dbReference type="PROSITE" id="PS51883">
    <property type="entry name" value="OBG"/>
    <property type="match status" value="1"/>
</dbReference>
<gene>
    <name evidence="1" type="primary">obg</name>
    <name type="ordered locus">Suden_1414</name>
</gene>
<protein>
    <recommendedName>
        <fullName evidence="1">GTPase Obg</fullName>
        <ecNumber evidence="1">3.6.5.-</ecNumber>
    </recommendedName>
    <alternativeName>
        <fullName evidence="1">GTP-binding protein Obg</fullName>
    </alternativeName>
</protein>
<organism>
    <name type="scientific">Sulfurimonas denitrificans (strain ATCC 33889 / DSM 1251)</name>
    <name type="common">Thiomicrospira denitrificans (strain ATCC 33889 / DSM 1251)</name>
    <dbReference type="NCBI Taxonomy" id="326298"/>
    <lineage>
        <taxon>Bacteria</taxon>
        <taxon>Pseudomonadati</taxon>
        <taxon>Campylobacterota</taxon>
        <taxon>Epsilonproteobacteria</taxon>
        <taxon>Campylobacterales</taxon>
        <taxon>Sulfurimonadaceae</taxon>
        <taxon>Sulfurimonas</taxon>
    </lineage>
</organism>
<proteinExistence type="inferred from homology"/>
<comment type="function">
    <text evidence="1">An essential GTPase which binds GTP, GDP and possibly (p)ppGpp with moderate affinity, with high nucleotide exchange rates and a fairly low GTP hydrolysis rate. Plays a role in control of the cell cycle, stress response, ribosome biogenesis and in those bacteria that undergo differentiation, in morphogenesis control.</text>
</comment>
<comment type="cofactor">
    <cofactor evidence="1">
        <name>Mg(2+)</name>
        <dbReference type="ChEBI" id="CHEBI:18420"/>
    </cofactor>
</comment>
<comment type="subunit">
    <text evidence="1">Monomer.</text>
</comment>
<comment type="subcellular location">
    <subcellularLocation>
        <location evidence="1">Cytoplasm</location>
    </subcellularLocation>
</comment>
<comment type="similarity">
    <text evidence="1">Belongs to the TRAFAC class OBG-HflX-like GTPase superfamily. OBG GTPase family.</text>
</comment>
<name>OBG_SULDN</name>
<sequence>MFTDVVELTVSSGKGGQGCVSFRREKFVVNGGPNGGDGGKGGDIWFKCDNNTHTLSHFQKKMHIKADNGAPGESSNMSGKSGVKKVIIVPPGTQIIDMDSEEVLFDMLIDGQEELFISGGRGGLGNTHFKSSTNQRPTYAQPGEKGETRRIKLDLKLIADVGLVGFPNVGKSTLISTVSNARPEIANYEFTTLTPKLGQVNIGDFESFIMADIPGIIGGAHEGKGLGIEFLRHIERTQILLFMVDLASYRDLKEQIETLKAEVGAFSDKLGSSKYAIALTRADAVAQDEINDLVNSFMEIVGVKATSNSNLNFDKNLPYFIQDSADETLGYDREIPYFVMPISSATNKNIDPLKHALFNLVQTNRIYSK</sequence>
<reference key="1">
    <citation type="journal article" date="2008" name="Appl. Environ. Microbiol.">
        <title>Genome of the epsilonproteobacterial chemolithoautotroph Sulfurimonas denitrificans.</title>
        <authorList>
            <person name="Sievert S.M."/>
            <person name="Scott K.M."/>
            <person name="Klotz M.G."/>
            <person name="Chain P.S.G."/>
            <person name="Hauser L.J."/>
            <person name="Hemp J."/>
            <person name="Huegler M."/>
            <person name="Land M."/>
            <person name="Lapidus A."/>
            <person name="Larimer F.W."/>
            <person name="Lucas S."/>
            <person name="Malfatti S.A."/>
            <person name="Meyer F."/>
            <person name="Paulsen I.T."/>
            <person name="Ren Q."/>
            <person name="Simon J."/>
            <person name="Bailey K."/>
            <person name="Diaz E."/>
            <person name="Fitzpatrick K.A."/>
            <person name="Glover B."/>
            <person name="Gwatney N."/>
            <person name="Korajkic A."/>
            <person name="Long A."/>
            <person name="Mobberley J.M."/>
            <person name="Pantry S.N."/>
            <person name="Pazder G."/>
            <person name="Peterson S."/>
            <person name="Quintanilla J.D."/>
            <person name="Sprinkle R."/>
            <person name="Stephens J."/>
            <person name="Thomas P."/>
            <person name="Vaughn R."/>
            <person name="Weber M.J."/>
            <person name="Wooten L.L."/>
        </authorList>
    </citation>
    <scope>NUCLEOTIDE SEQUENCE [LARGE SCALE GENOMIC DNA]</scope>
    <source>
        <strain>ATCC 33889 / DSM 1251</strain>
    </source>
</reference>
<keyword id="KW-0963">Cytoplasm</keyword>
<keyword id="KW-0342">GTP-binding</keyword>
<keyword id="KW-0378">Hydrolase</keyword>
<keyword id="KW-0460">Magnesium</keyword>
<keyword id="KW-0479">Metal-binding</keyword>
<keyword id="KW-0547">Nucleotide-binding</keyword>
<keyword id="KW-1185">Reference proteome</keyword>
<evidence type="ECO:0000255" key="1">
    <source>
        <dbReference type="HAMAP-Rule" id="MF_01454"/>
    </source>
</evidence>
<evidence type="ECO:0000255" key="2">
    <source>
        <dbReference type="PROSITE-ProRule" id="PRU01231"/>
    </source>
</evidence>
<evidence type="ECO:0000256" key="3">
    <source>
        <dbReference type="SAM" id="MobiDB-lite"/>
    </source>
</evidence>